<dbReference type="EC" id="1.4.3.5" evidence="1"/>
<dbReference type="EMBL" id="CP001068">
    <property type="protein sequence ID" value="ACD25868.1"/>
    <property type="molecule type" value="Genomic_DNA"/>
</dbReference>
<dbReference type="SMR" id="B2U826"/>
<dbReference type="STRING" id="402626.Rpic_0717"/>
<dbReference type="KEGG" id="rpi:Rpic_0717"/>
<dbReference type="eggNOG" id="COG0259">
    <property type="taxonomic scope" value="Bacteria"/>
</dbReference>
<dbReference type="HOGENOM" id="CLU_032263_2_2_4"/>
<dbReference type="UniPathway" id="UPA01068">
    <property type="reaction ID" value="UER00304"/>
</dbReference>
<dbReference type="UniPathway" id="UPA01068">
    <property type="reaction ID" value="UER00305"/>
</dbReference>
<dbReference type="GO" id="GO:0010181">
    <property type="term" value="F:FMN binding"/>
    <property type="evidence" value="ECO:0007669"/>
    <property type="project" value="UniProtKB-UniRule"/>
</dbReference>
<dbReference type="GO" id="GO:0004733">
    <property type="term" value="F:pyridoxamine phosphate oxidase activity"/>
    <property type="evidence" value="ECO:0007669"/>
    <property type="project" value="UniProtKB-UniRule"/>
</dbReference>
<dbReference type="GO" id="GO:0008615">
    <property type="term" value="P:pyridoxine biosynthetic process"/>
    <property type="evidence" value="ECO:0007669"/>
    <property type="project" value="UniProtKB-KW"/>
</dbReference>
<dbReference type="FunFam" id="2.30.110.10:FF:000020">
    <property type="entry name" value="PNPO isoform 11"/>
    <property type="match status" value="1"/>
</dbReference>
<dbReference type="Gene3D" id="2.30.110.10">
    <property type="entry name" value="Electron Transport, Fmn-binding Protein, Chain A"/>
    <property type="match status" value="1"/>
</dbReference>
<dbReference type="HAMAP" id="MF_01629">
    <property type="entry name" value="PdxH"/>
    <property type="match status" value="1"/>
</dbReference>
<dbReference type="InterPro" id="IPR000659">
    <property type="entry name" value="Pyridox_Oxase"/>
</dbReference>
<dbReference type="InterPro" id="IPR019740">
    <property type="entry name" value="Pyridox_Oxase_CS"/>
</dbReference>
<dbReference type="InterPro" id="IPR011576">
    <property type="entry name" value="Pyridox_Oxase_N"/>
</dbReference>
<dbReference type="InterPro" id="IPR019576">
    <property type="entry name" value="Pyridoxamine_oxidase_dimer_C"/>
</dbReference>
<dbReference type="InterPro" id="IPR012349">
    <property type="entry name" value="Split_barrel_FMN-bd"/>
</dbReference>
<dbReference type="NCBIfam" id="TIGR00558">
    <property type="entry name" value="pdxH"/>
    <property type="match status" value="1"/>
</dbReference>
<dbReference type="NCBIfam" id="NF004231">
    <property type="entry name" value="PRK05679.1"/>
    <property type="match status" value="1"/>
</dbReference>
<dbReference type="PANTHER" id="PTHR10851:SF0">
    <property type="entry name" value="PYRIDOXINE-5'-PHOSPHATE OXIDASE"/>
    <property type="match status" value="1"/>
</dbReference>
<dbReference type="PANTHER" id="PTHR10851">
    <property type="entry name" value="PYRIDOXINE-5-PHOSPHATE OXIDASE"/>
    <property type="match status" value="1"/>
</dbReference>
<dbReference type="Pfam" id="PF10590">
    <property type="entry name" value="PNP_phzG_C"/>
    <property type="match status" value="1"/>
</dbReference>
<dbReference type="Pfam" id="PF01243">
    <property type="entry name" value="PNPOx_N"/>
    <property type="match status" value="1"/>
</dbReference>
<dbReference type="PIRSF" id="PIRSF000190">
    <property type="entry name" value="Pyd_amn-ph_oxd"/>
    <property type="match status" value="1"/>
</dbReference>
<dbReference type="SUPFAM" id="SSF50475">
    <property type="entry name" value="FMN-binding split barrel"/>
    <property type="match status" value="1"/>
</dbReference>
<dbReference type="PROSITE" id="PS01064">
    <property type="entry name" value="PYRIDOX_OXIDASE"/>
    <property type="match status" value="1"/>
</dbReference>
<keyword id="KW-0285">Flavoprotein</keyword>
<keyword id="KW-0288">FMN</keyword>
<keyword id="KW-0560">Oxidoreductase</keyword>
<keyword id="KW-0664">Pyridoxine biosynthesis</keyword>
<name>PDXH_RALPJ</name>
<evidence type="ECO:0000255" key="1">
    <source>
        <dbReference type="HAMAP-Rule" id="MF_01629"/>
    </source>
</evidence>
<gene>
    <name evidence="1" type="primary">pdxH</name>
    <name type="ordered locus">Rpic_0717</name>
</gene>
<proteinExistence type="inferred from homology"/>
<accession>B2U826</accession>
<reference key="1">
    <citation type="submission" date="2008-05" db="EMBL/GenBank/DDBJ databases">
        <title>Complete sequence of chromosome 1 of Ralstonia pickettii 12J.</title>
        <authorList>
            <person name="Lucas S."/>
            <person name="Copeland A."/>
            <person name="Lapidus A."/>
            <person name="Glavina del Rio T."/>
            <person name="Dalin E."/>
            <person name="Tice H."/>
            <person name="Bruce D."/>
            <person name="Goodwin L."/>
            <person name="Pitluck S."/>
            <person name="Meincke L."/>
            <person name="Brettin T."/>
            <person name="Detter J.C."/>
            <person name="Han C."/>
            <person name="Kuske C.R."/>
            <person name="Schmutz J."/>
            <person name="Larimer F."/>
            <person name="Land M."/>
            <person name="Hauser L."/>
            <person name="Kyrpides N."/>
            <person name="Mikhailova N."/>
            <person name="Marsh T."/>
            <person name="Richardson P."/>
        </authorList>
    </citation>
    <scope>NUCLEOTIDE SEQUENCE [LARGE SCALE GENOMIC DNA]</scope>
    <source>
        <strain>12J</strain>
    </source>
</reference>
<sequence length="212" mass="24209">MTSIADIRTDYARASLDIADVDASPLRQFRRWFDEALKAEVAEVNAMTLATVDPHGQPSARIVLLKNLDERGFTFFTNYASHKGEELAANPRAALLFHWIGLERQVRVQGIVEKVSEAESDAYYHSRPLGSRLGAWASEQSSEVPDRATLEAREAEYRQRFGDAPPRPPHWGGYRLLPERLEFWQGRPSRLHDRLEYRKHADGSWTIVRLAP</sequence>
<protein>
    <recommendedName>
        <fullName evidence="1">Pyridoxine/pyridoxamine 5'-phosphate oxidase</fullName>
        <ecNumber evidence="1">1.4.3.5</ecNumber>
    </recommendedName>
    <alternativeName>
        <fullName evidence="1">PNP/PMP oxidase</fullName>
        <shortName evidence="1">PNPOx</shortName>
    </alternativeName>
    <alternativeName>
        <fullName evidence="1">Pyridoxal 5'-phosphate synthase</fullName>
    </alternativeName>
</protein>
<organism>
    <name type="scientific">Ralstonia pickettii (strain 12J)</name>
    <dbReference type="NCBI Taxonomy" id="402626"/>
    <lineage>
        <taxon>Bacteria</taxon>
        <taxon>Pseudomonadati</taxon>
        <taxon>Pseudomonadota</taxon>
        <taxon>Betaproteobacteria</taxon>
        <taxon>Burkholderiales</taxon>
        <taxon>Burkholderiaceae</taxon>
        <taxon>Ralstonia</taxon>
    </lineage>
</organism>
<feature type="chain" id="PRO_1000186327" description="Pyridoxine/pyridoxamine 5'-phosphate oxidase">
    <location>
        <begin position="1"/>
        <end position="212"/>
    </location>
</feature>
<feature type="binding site" evidence="1">
    <location>
        <begin position="8"/>
        <end position="11"/>
    </location>
    <ligand>
        <name>substrate</name>
    </ligand>
</feature>
<feature type="binding site" evidence="1">
    <location>
        <begin position="61"/>
        <end position="66"/>
    </location>
    <ligand>
        <name>FMN</name>
        <dbReference type="ChEBI" id="CHEBI:58210"/>
    </ligand>
</feature>
<feature type="binding site" evidence="1">
    <location>
        <position position="66"/>
    </location>
    <ligand>
        <name>substrate</name>
    </ligand>
</feature>
<feature type="binding site" evidence="1">
    <location>
        <begin position="76"/>
        <end position="77"/>
    </location>
    <ligand>
        <name>FMN</name>
        <dbReference type="ChEBI" id="CHEBI:58210"/>
    </ligand>
</feature>
<feature type="binding site" evidence="1">
    <location>
        <position position="83"/>
    </location>
    <ligand>
        <name>FMN</name>
        <dbReference type="ChEBI" id="CHEBI:58210"/>
    </ligand>
</feature>
<feature type="binding site" evidence="1">
    <location>
        <position position="105"/>
    </location>
    <ligand>
        <name>FMN</name>
        <dbReference type="ChEBI" id="CHEBI:58210"/>
    </ligand>
</feature>
<feature type="binding site" evidence="1">
    <location>
        <position position="123"/>
    </location>
    <ligand>
        <name>substrate</name>
    </ligand>
</feature>
<feature type="binding site" evidence="1">
    <location>
        <position position="127"/>
    </location>
    <ligand>
        <name>substrate</name>
    </ligand>
</feature>
<feature type="binding site" evidence="1">
    <location>
        <position position="131"/>
    </location>
    <ligand>
        <name>substrate</name>
    </ligand>
</feature>
<feature type="binding site" evidence="1">
    <location>
        <begin position="140"/>
        <end position="141"/>
    </location>
    <ligand>
        <name>FMN</name>
        <dbReference type="ChEBI" id="CHEBI:58210"/>
    </ligand>
</feature>
<feature type="binding site" evidence="1">
    <location>
        <position position="184"/>
    </location>
    <ligand>
        <name>FMN</name>
        <dbReference type="ChEBI" id="CHEBI:58210"/>
    </ligand>
</feature>
<feature type="binding site" evidence="1">
    <location>
        <begin position="190"/>
        <end position="192"/>
    </location>
    <ligand>
        <name>substrate</name>
    </ligand>
</feature>
<feature type="binding site" evidence="1">
    <location>
        <position position="194"/>
    </location>
    <ligand>
        <name>FMN</name>
        <dbReference type="ChEBI" id="CHEBI:58210"/>
    </ligand>
</feature>
<comment type="function">
    <text evidence="1">Catalyzes the oxidation of either pyridoxine 5'-phosphate (PNP) or pyridoxamine 5'-phosphate (PMP) into pyridoxal 5'-phosphate (PLP).</text>
</comment>
<comment type="catalytic activity">
    <reaction evidence="1">
        <text>pyridoxamine 5'-phosphate + O2 + H2O = pyridoxal 5'-phosphate + H2O2 + NH4(+)</text>
        <dbReference type="Rhea" id="RHEA:15817"/>
        <dbReference type="ChEBI" id="CHEBI:15377"/>
        <dbReference type="ChEBI" id="CHEBI:15379"/>
        <dbReference type="ChEBI" id="CHEBI:16240"/>
        <dbReference type="ChEBI" id="CHEBI:28938"/>
        <dbReference type="ChEBI" id="CHEBI:58451"/>
        <dbReference type="ChEBI" id="CHEBI:597326"/>
        <dbReference type="EC" id="1.4.3.5"/>
    </reaction>
</comment>
<comment type="catalytic activity">
    <reaction evidence="1">
        <text>pyridoxine 5'-phosphate + O2 = pyridoxal 5'-phosphate + H2O2</text>
        <dbReference type="Rhea" id="RHEA:15149"/>
        <dbReference type="ChEBI" id="CHEBI:15379"/>
        <dbReference type="ChEBI" id="CHEBI:16240"/>
        <dbReference type="ChEBI" id="CHEBI:58589"/>
        <dbReference type="ChEBI" id="CHEBI:597326"/>
        <dbReference type="EC" id="1.4.3.5"/>
    </reaction>
</comment>
<comment type="cofactor">
    <cofactor evidence="1">
        <name>FMN</name>
        <dbReference type="ChEBI" id="CHEBI:58210"/>
    </cofactor>
    <text evidence="1">Binds 1 FMN per subunit.</text>
</comment>
<comment type="pathway">
    <text evidence="1">Cofactor metabolism; pyridoxal 5'-phosphate salvage; pyridoxal 5'-phosphate from pyridoxamine 5'-phosphate: step 1/1.</text>
</comment>
<comment type="pathway">
    <text evidence="1">Cofactor metabolism; pyridoxal 5'-phosphate salvage; pyridoxal 5'-phosphate from pyridoxine 5'-phosphate: step 1/1.</text>
</comment>
<comment type="subunit">
    <text evidence="1">Homodimer.</text>
</comment>
<comment type="similarity">
    <text evidence="1">Belongs to the pyridoxamine 5'-phosphate oxidase family.</text>
</comment>